<proteinExistence type="uncertain"/>
<accession>Q8N7Q2</accession>
<accession>A6NFV2</accession>
<gene>
    <name type="primary">CELF2-AS1</name>
    <name type="synonym">C10orf31</name>
</gene>
<name>CEAS1_HUMAN</name>
<dbReference type="EMBL" id="AK097813">
    <property type="protein sequence ID" value="BAC05176.1"/>
    <property type="status" value="ALT_FRAME"/>
    <property type="molecule type" value="mRNA"/>
</dbReference>
<dbReference type="EMBL" id="AC026887">
    <property type="status" value="NOT_ANNOTATED_CDS"/>
    <property type="molecule type" value="Genomic_DNA"/>
</dbReference>
<dbReference type="BioMuta" id="HGNC:23515"/>
<dbReference type="DMDM" id="215273955"/>
<dbReference type="AGR" id="HGNC:23515"/>
<dbReference type="GeneCards" id="CELF2-AS1"/>
<dbReference type="HGNC" id="HGNC:23515">
    <property type="gene designation" value="CELF2-AS1"/>
</dbReference>
<dbReference type="MalaCards" id="CELF2-AS1"/>
<dbReference type="neXtProt" id="NX_Q8N7Q2"/>
<dbReference type="InParanoid" id="Q8N7Q2"/>
<dbReference type="PAN-GO" id="Q8N7Q2">
    <property type="GO annotations" value="0 GO annotations based on evolutionary models"/>
</dbReference>
<dbReference type="PhylomeDB" id="Q8N7Q2"/>
<dbReference type="TreeFam" id="TF342046"/>
<dbReference type="ChiTaRS" id="CELF2-AS1">
    <property type="organism name" value="human"/>
</dbReference>
<dbReference type="Pharos" id="Q8N7Q2">
    <property type="development level" value="Tdark"/>
</dbReference>
<dbReference type="Proteomes" id="UP000005640">
    <property type="component" value="Unplaced"/>
</dbReference>
<dbReference type="RNAct" id="Q8N7Q2">
    <property type="molecule type" value="protein"/>
</dbReference>
<dbReference type="GO" id="GO:0005576">
    <property type="term" value="C:extracellular region"/>
    <property type="evidence" value="ECO:0007669"/>
    <property type="project" value="UniProtKB-SubCell"/>
</dbReference>
<sequence>MFCLLHLCFYLANFASSIKRTHAVNGCCGLQMIALWAQSSGNADARVEEILAGEERRLAALLGSQGMRFWVCLAACRAMWGLAARRGRAEDSSSSPVDASKFPWRGGQHRTTMMPCLLRVGVFRPCHVRPTGDPSCDVQPPRLGFSRVPDTQVAFYGSGHWDPTPFSVHSCFFNFQVRKIIFLL</sequence>
<keyword id="KW-1185">Reference proteome</keyword>
<keyword id="KW-0964">Secreted</keyword>
<keyword id="KW-0732">Signal</keyword>
<feature type="signal peptide" evidence="1">
    <location>
        <begin position="1"/>
        <end position="23"/>
    </location>
</feature>
<feature type="chain" id="PRO_0000243939" description="Putative uncharacterized protein CELF2-AS1">
    <location>
        <begin position="24"/>
        <end position="184"/>
    </location>
</feature>
<comment type="subcellular location">
    <subcellularLocation>
        <location evidence="2">Secreted</location>
    </subcellularLocation>
</comment>
<comment type="caution">
    <text evidence="2">Product of a dubious CDS prediction. Encoded in an intron of the CELF2/CUGBP2 gene (opposite strand).</text>
</comment>
<comment type="sequence caution" evidence="2">
    <conflict type="frameshift">
        <sequence resource="EMBL-CDS" id="BAC05176"/>
    </conflict>
</comment>
<evidence type="ECO:0000255" key="1"/>
<evidence type="ECO:0000305" key="2"/>
<organism>
    <name type="scientific">Homo sapiens</name>
    <name type="common">Human</name>
    <dbReference type="NCBI Taxonomy" id="9606"/>
    <lineage>
        <taxon>Eukaryota</taxon>
        <taxon>Metazoa</taxon>
        <taxon>Chordata</taxon>
        <taxon>Craniata</taxon>
        <taxon>Vertebrata</taxon>
        <taxon>Euteleostomi</taxon>
        <taxon>Mammalia</taxon>
        <taxon>Eutheria</taxon>
        <taxon>Euarchontoglires</taxon>
        <taxon>Primates</taxon>
        <taxon>Haplorrhini</taxon>
        <taxon>Catarrhini</taxon>
        <taxon>Hominidae</taxon>
        <taxon>Homo</taxon>
    </lineage>
</organism>
<reference key="1">
    <citation type="journal article" date="2004" name="Nat. Genet.">
        <title>Complete sequencing and characterization of 21,243 full-length human cDNAs.</title>
        <authorList>
            <person name="Ota T."/>
            <person name="Suzuki Y."/>
            <person name="Nishikawa T."/>
            <person name="Otsuki T."/>
            <person name="Sugiyama T."/>
            <person name="Irie R."/>
            <person name="Wakamatsu A."/>
            <person name="Hayashi K."/>
            <person name="Sato H."/>
            <person name="Nagai K."/>
            <person name="Kimura K."/>
            <person name="Makita H."/>
            <person name="Sekine M."/>
            <person name="Obayashi M."/>
            <person name="Nishi T."/>
            <person name="Shibahara T."/>
            <person name="Tanaka T."/>
            <person name="Ishii S."/>
            <person name="Yamamoto J."/>
            <person name="Saito K."/>
            <person name="Kawai Y."/>
            <person name="Isono Y."/>
            <person name="Nakamura Y."/>
            <person name="Nagahari K."/>
            <person name="Murakami K."/>
            <person name="Yasuda T."/>
            <person name="Iwayanagi T."/>
            <person name="Wagatsuma M."/>
            <person name="Shiratori A."/>
            <person name="Sudo H."/>
            <person name="Hosoiri T."/>
            <person name="Kaku Y."/>
            <person name="Kodaira H."/>
            <person name="Kondo H."/>
            <person name="Sugawara M."/>
            <person name="Takahashi M."/>
            <person name="Kanda K."/>
            <person name="Yokoi T."/>
            <person name="Furuya T."/>
            <person name="Kikkawa E."/>
            <person name="Omura Y."/>
            <person name="Abe K."/>
            <person name="Kamihara K."/>
            <person name="Katsuta N."/>
            <person name="Sato K."/>
            <person name="Tanikawa M."/>
            <person name="Yamazaki M."/>
            <person name="Ninomiya K."/>
            <person name="Ishibashi T."/>
            <person name="Yamashita H."/>
            <person name="Murakawa K."/>
            <person name="Fujimori K."/>
            <person name="Tanai H."/>
            <person name="Kimata M."/>
            <person name="Watanabe M."/>
            <person name="Hiraoka S."/>
            <person name="Chiba Y."/>
            <person name="Ishida S."/>
            <person name="Ono Y."/>
            <person name="Takiguchi S."/>
            <person name="Watanabe S."/>
            <person name="Yosida M."/>
            <person name="Hotuta T."/>
            <person name="Kusano J."/>
            <person name="Kanehori K."/>
            <person name="Takahashi-Fujii A."/>
            <person name="Hara H."/>
            <person name="Tanase T.-O."/>
            <person name="Nomura Y."/>
            <person name="Togiya S."/>
            <person name="Komai F."/>
            <person name="Hara R."/>
            <person name="Takeuchi K."/>
            <person name="Arita M."/>
            <person name="Imose N."/>
            <person name="Musashino K."/>
            <person name="Yuuki H."/>
            <person name="Oshima A."/>
            <person name="Sasaki N."/>
            <person name="Aotsuka S."/>
            <person name="Yoshikawa Y."/>
            <person name="Matsunawa H."/>
            <person name="Ichihara T."/>
            <person name="Shiohata N."/>
            <person name="Sano S."/>
            <person name="Moriya S."/>
            <person name="Momiyama H."/>
            <person name="Satoh N."/>
            <person name="Takami S."/>
            <person name="Terashima Y."/>
            <person name="Suzuki O."/>
            <person name="Nakagawa S."/>
            <person name="Senoh A."/>
            <person name="Mizoguchi H."/>
            <person name="Goto Y."/>
            <person name="Shimizu F."/>
            <person name="Wakebe H."/>
            <person name="Hishigaki H."/>
            <person name="Watanabe T."/>
            <person name="Sugiyama A."/>
            <person name="Takemoto M."/>
            <person name="Kawakami B."/>
            <person name="Yamazaki M."/>
            <person name="Watanabe K."/>
            <person name="Kumagai A."/>
            <person name="Itakura S."/>
            <person name="Fukuzumi Y."/>
            <person name="Fujimori Y."/>
            <person name="Komiyama M."/>
            <person name="Tashiro H."/>
            <person name="Tanigami A."/>
            <person name="Fujiwara T."/>
            <person name="Ono T."/>
            <person name="Yamada K."/>
            <person name="Fujii Y."/>
            <person name="Ozaki K."/>
            <person name="Hirao M."/>
            <person name="Ohmori Y."/>
            <person name="Kawabata A."/>
            <person name="Hikiji T."/>
            <person name="Kobatake N."/>
            <person name="Inagaki H."/>
            <person name="Ikema Y."/>
            <person name="Okamoto S."/>
            <person name="Okitani R."/>
            <person name="Kawakami T."/>
            <person name="Noguchi S."/>
            <person name="Itoh T."/>
            <person name="Shigeta K."/>
            <person name="Senba T."/>
            <person name="Matsumura K."/>
            <person name="Nakajima Y."/>
            <person name="Mizuno T."/>
            <person name="Morinaga M."/>
            <person name="Sasaki M."/>
            <person name="Togashi T."/>
            <person name="Oyama M."/>
            <person name="Hata H."/>
            <person name="Watanabe M."/>
            <person name="Komatsu T."/>
            <person name="Mizushima-Sugano J."/>
            <person name="Satoh T."/>
            <person name="Shirai Y."/>
            <person name="Takahashi Y."/>
            <person name="Nakagawa K."/>
            <person name="Okumura K."/>
            <person name="Nagase T."/>
            <person name="Nomura N."/>
            <person name="Kikuchi H."/>
            <person name="Masuho Y."/>
            <person name="Yamashita R."/>
            <person name="Nakai K."/>
            <person name="Yada T."/>
            <person name="Nakamura Y."/>
            <person name="Ohara O."/>
            <person name="Isogai T."/>
            <person name="Sugano S."/>
        </authorList>
    </citation>
    <scope>NUCLEOTIDE SEQUENCE [LARGE SCALE MRNA]</scope>
    <source>
        <tissue>Testis</tissue>
    </source>
</reference>
<reference key="2">
    <citation type="journal article" date="2004" name="Nature">
        <title>The DNA sequence and comparative analysis of human chromosome 10.</title>
        <authorList>
            <person name="Deloukas P."/>
            <person name="Earthrowl M.E."/>
            <person name="Grafham D.V."/>
            <person name="Rubenfield M."/>
            <person name="French L."/>
            <person name="Steward C.A."/>
            <person name="Sims S.K."/>
            <person name="Jones M.C."/>
            <person name="Searle S."/>
            <person name="Scott C."/>
            <person name="Howe K."/>
            <person name="Hunt S.E."/>
            <person name="Andrews T.D."/>
            <person name="Gilbert J.G.R."/>
            <person name="Swarbreck D."/>
            <person name="Ashurst J.L."/>
            <person name="Taylor A."/>
            <person name="Battles J."/>
            <person name="Bird C.P."/>
            <person name="Ainscough R."/>
            <person name="Almeida J.P."/>
            <person name="Ashwell R.I.S."/>
            <person name="Ambrose K.D."/>
            <person name="Babbage A.K."/>
            <person name="Bagguley C.L."/>
            <person name="Bailey J."/>
            <person name="Banerjee R."/>
            <person name="Bates K."/>
            <person name="Beasley H."/>
            <person name="Bray-Allen S."/>
            <person name="Brown A.J."/>
            <person name="Brown J.Y."/>
            <person name="Burford D.C."/>
            <person name="Burrill W."/>
            <person name="Burton J."/>
            <person name="Cahill P."/>
            <person name="Camire D."/>
            <person name="Carter N.P."/>
            <person name="Chapman J.C."/>
            <person name="Clark S.Y."/>
            <person name="Clarke G."/>
            <person name="Clee C.M."/>
            <person name="Clegg S."/>
            <person name="Corby N."/>
            <person name="Coulson A."/>
            <person name="Dhami P."/>
            <person name="Dutta I."/>
            <person name="Dunn M."/>
            <person name="Faulkner L."/>
            <person name="Frankish A."/>
            <person name="Frankland J.A."/>
            <person name="Garner P."/>
            <person name="Garnett J."/>
            <person name="Gribble S."/>
            <person name="Griffiths C."/>
            <person name="Grocock R."/>
            <person name="Gustafson E."/>
            <person name="Hammond S."/>
            <person name="Harley J.L."/>
            <person name="Hart E."/>
            <person name="Heath P.D."/>
            <person name="Ho T.P."/>
            <person name="Hopkins B."/>
            <person name="Horne J."/>
            <person name="Howden P.J."/>
            <person name="Huckle E."/>
            <person name="Hynds C."/>
            <person name="Johnson C."/>
            <person name="Johnson D."/>
            <person name="Kana A."/>
            <person name="Kay M."/>
            <person name="Kimberley A.M."/>
            <person name="Kershaw J.K."/>
            <person name="Kokkinaki M."/>
            <person name="Laird G.K."/>
            <person name="Lawlor S."/>
            <person name="Lee H.M."/>
            <person name="Leongamornlert D.A."/>
            <person name="Laird G."/>
            <person name="Lloyd C."/>
            <person name="Lloyd D.M."/>
            <person name="Loveland J."/>
            <person name="Lovell J."/>
            <person name="McLaren S."/>
            <person name="McLay K.E."/>
            <person name="McMurray A."/>
            <person name="Mashreghi-Mohammadi M."/>
            <person name="Matthews L."/>
            <person name="Milne S."/>
            <person name="Nickerson T."/>
            <person name="Nguyen M."/>
            <person name="Overton-Larty E."/>
            <person name="Palmer S.A."/>
            <person name="Pearce A.V."/>
            <person name="Peck A.I."/>
            <person name="Pelan S."/>
            <person name="Phillimore B."/>
            <person name="Porter K."/>
            <person name="Rice C.M."/>
            <person name="Rogosin A."/>
            <person name="Ross M.T."/>
            <person name="Sarafidou T."/>
            <person name="Sehra H.K."/>
            <person name="Shownkeen R."/>
            <person name="Skuce C.D."/>
            <person name="Smith M."/>
            <person name="Standring L."/>
            <person name="Sycamore N."/>
            <person name="Tester J."/>
            <person name="Thorpe A."/>
            <person name="Torcasso W."/>
            <person name="Tracey A."/>
            <person name="Tromans A."/>
            <person name="Tsolas J."/>
            <person name="Wall M."/>
            <person name="Walsh J."/>
            <person name="Wang H."/>
            <person name="Weinstock K."/>
            <person name="West A.P."/>
            <person name="Willey D.L."/>
            <person name="Whitehead S.L."/>
            <person name="Wilming L."/>
            <person name="Wray P.W."/>
            <person name="Young L."/>
            <person name="Chen Y."/>
            <person name="Lovering R.C."/>
            <person name="Moschonas N.K."/>
            <person name="Siebert R."/>
            <person name="Fechtel K."/>
            <person name="Bentley D."/>
            <person name="Durbin R.M."/>
            <person name="Hubbard T."/>
            <person name="Doucette-Stamm L."/>
            <person name="Beck S."/>
            <person name="Smith D.R."/>
            <person name="Rogers J."/>
        </authorList>
    </citation>
    <scope>NUCLEOTIDE SEQUENCE [LARGE SCALE GENOMIC DNA]</scope>
</reference>
<protein>
    <recommendedName>
        <fullName>Putative uncharacterized protein CELF2-AS1</fullName>
    </recommendedName>
    <alternativeName>
        <fullName>CELF2 antisense RNA 1</fullName>
    </alternativeName>
    <alternativeName>
        <fullName>CELF2 antisense gene protein 1</fullName>
    </alternativeName>
</protein>